<name>GSXL7_ARATH</name>
<gene>
    <name type="ordered locus">At1g62580</name>
    <name type="ORF">T3P18.14</name>
</gene>
<accession>Q9SXD9</accession>
<accession>F4HYU0</accession>
<reference key="1">
    <citation type="journal article" date="2000" name="Nature">
        <title>Sequence and analysis of chromosome 1 of the plant Arabidopsis thaliana.</title>
        <authorList>
            <person name="Theologis A."/>
            <person name="Ecker J.R."/>
            <person name="Palm C.J."/>
            <person name="Federspiel N.A."/>
            <person name="Kaul S."/>
            <person name="White O."/>
            <person name="Alonso J."/>
            <person name="Altafi H."/>
            <person name="Araujo R."/>
            <person name="Bowman C.L."/>
            <person name="Brooks S.Y."/>
            <person name="Buehler E."/>
            <person name="Chan A."/>
            <person name="Chao Q."/>
            <person name="Chen H."/>
            <person name="Cheuk R.F."/>
            <person name="Chin C.W."/>
            <person name="Chung M.K."/>
            <person name="Conn L."/>
            <person name="Conway A.B."/>
            <person name="Conway A.R."/>
            <person name="Creasy T.H."/>
            <person name="Dewar K."/>
            <person name="Dunn P."/>
            <person name="Etgu P."/>
            <person name="Feldblyum T.V."/>
            <person name="Feng J.-D."/>
            <person name="Fong B."/>
            <person name="Fujii C.Y."/>
            <person name="Gill J.E."/>
            <person name="Goldsmith A.D."/>
            <person name="Haas B."/>
            <person name="Hansen N.F."/>
            <person name="Hughes B."/>
            <person name="Huizar L."/>
            <person name="Hunter J.L."/>
            <person name="Jenkins J."/>
            <person name="Johnson-Hopson C."/>
            <person name="Khan S."/>
            <person name="Khaykin E."/>
            <person name="Kim C.J."/>
            <person name="Koo H.L."/>
            <person name="Kremenetskaia I."/>
            <person name="Kurtz D.B."/>
            <person name="Kwan A."/>
            <person name="Lam B."/>
            <person name="Langin-Hooper S."/>
            <person name="Lee A."/>
            <person name="Lee J.M."/>
            <person name="Lenz C.A."/>
            <person name="Li J.H."/>
            <person name="Li Y.-P."/>
            <person name="Lin X."/>
            <person name="Liu S.X."/>
            <person name="Liu Z.A."/>
            <person name="Luros J.S."/>
            <person name="Maiti R."/>
            <person name="Marziali A."/>
            <person name="Militscher J."/>
            <person name="Miranda M."/>
            <person name="Nguyen M."/>
            <person name="Nierman W.C."/>
            <person name="Osborne B.I."/>
            <person name="Pai G."/>
            <person name="Peterson J."/>
            <person name="Pham P.K."/>
            <person name="Rizzo M."/>
            <person name="Rooney T."/>
            <person name="Rowley D."/>
            <person name="Sakano H."/>
            <person name="Salzberg S.L."/>
            <person name="Schwartz J.R."/>
            <person name="Shinn P."/>
            <person name="Southwick A.M."/>
            <person name="Sun H."/>
            <person name="Tallon L.J."/>
            <person name="Tambunga G."/>
            <person name="Toriumi M.J."/>
            <person name="Town C.D."/>
            <person name="Utterback T."/>
            <person name="Van Aken S."/>
            <person name="Vaysberg M."/>
            <person name="Vysotskaia V.S."/>
            <person name="Walker M."/>
            <person name="Wu D."/>
            <person name="Yu G."/>
            <person name="Fraser C.M."/>
            <person name="Venter J.C."/>
            <person name="Davis R.W."/>
        </authorList>
    </citation>
    <scope>NUCLEOTIDE SEQUENCE [LARGE SCALE GENOMIC DNA]</scope>
    <source>
        <strain>cv. Columbia</strain>
    </source>
</reference>
<reference key="2">
    <citation type="journal article" date="2017" name="Plant J.">
        <title>Araport11: a complete reannotation of the Arabidopsis thaliana reference genome.</title>
        <authorList>
            <person name="Cheng C.Y."/>
            <person name="Krishnakumar V."/>
            <person name="Chan A.P."/>
            <person name="Thibaud-Nissen F."/>
            <person name="Schobel S."/>
            <person name="Town C.D."/>
        </authorList>
    </citation>
    <scope>GENOME REANNOTATION</scope>
    <source>
        <strain>cv. Columbia</strain>
    </source>
</reference>
<reference key="3">
    <citation type="journal article" date="2007" name="Plant J.">
        <title>Identification of a flavin-monooxygenase as the S-oxygenating enzyme in aliphatic glucosinolate biosynthesis in Arabidopsis.</title>
        <authorList>
            <person name="Hansen B.G."/>
            <person name="Kliebenstein D.J."/>
            <person name="Halkier B.A."/>
        </authorList>
    </citation>
    <scope>GENE FAMILY</scope>
    <source>
        <strain>cv. Columbia</strain>
    </source>
</reference>
<comment type="function">
    <text evidence="1">Catalyzes the conversion of methylthioalkyl glucosinolates of any chain length into methylsulfinylalkyl glucosinolates.</text>
</comment>
<comment type="cofactor">
    <cofactor evidence="1">
        <name>FAD</name>
        <dbReference type="ChEBI" id="CHEBI:57692"/>
    </cofactor>
</comment>
<comment type="similarity">
    <text evidence="3">Belongs to the FMO family.</text>
</comment>
<comment type="sequence caution" evidence="3">
    <conflict type="erroneous gene model prediction">
        <sequence resource="EMBL-CDS" id="AAD43615"/>
    </conflict>
</comment>
<comment type="sequence caution" evidence="3">
    <conflict type="erroneous gene model prediction">
        <sequence resource="EMBL-CDS" id="AEE33980"/>
    </conflict>
</comment>
<feature type="chain" id="PRO_0000401962" description="Flavin-containing monooxygenase FMO GS-OX-like 7">
    <location>
        <begin position="1"/>
        <end position="464"/>
    </location>
</feature>
<feature type="binding site" evidence="2">
    <location>
        <begin position="18"/>
        <end position="23"/>
    </location>
    <ligand>
        <name>FAD</name>
        <dbReference type="ChEBI" id="CHEBI:57692"/>
    </ligand>
</feature>
<feature type="binding site" evidence="2">
    <location>
        <begin position="214"/>
        <end position="219"/>
    </location>
    <ligand>
        <name>NADP(+)</name>
        <dbReference type="ChEBI" id="CHEBI:58349"/>
    </ligand>
</feature>
<sequence>MVPAVNPPTTSNHVAVIGAGAAGLVAARELRREGHSVVVFERGNHIGGVWAYTPNVEPDPLSIDPTRPVIHSSLYSSLRTIIPQECMGFTDFPFSTRLENGSRDPRRHPGHSEVLAYLRDFVREFKIEEMIRFETEVVRVEQAGENPKKWRVKSRNFGDISDEIYDAVVVCNGHYTEPRHALIPGIDTWPGKQIHSHNYRVPEQVKDQVVVVIGSSVSGVDISRDIANVTKEVHISSRSTKPETYEKLPGYDNLWLHSNIETVREDGSVVFKNGKTVYADTIMHCTGYKYYFPFLDTKGEVTVEDNRVGPLYKHVFPPALSPGLSFIGLPWQVIPFPMFELQSKWVAAVLAGRVSLPSQEEMEDTKMFYLKLEASCIPKRYTHLMAELDSQFVYNNWLADQCDYPRIEKWREQMFYKVFKRIQSQASTYKDDWDDDHLIAEAYEDFVKFPSNYPSSLIEREYTS</sequence>
<proteinExistence type="inferred from homology"/>
<evidence type="ECO:0000250" key="1"/>
<evidence type="ECO:0000255" key="2"/>
<evidence type="ECO:0000305" key="3"/>
<organism>
    <name type="scientific">Arabidopsis thaliana</name>
    <name type="common">Mouse-ear cress</name>
    <dbReference type="NCBI Taxonomy" id="3702"/>
    <lineage>
        <taxon>Eukaryota</taxon>
        <taxon>Viridiplantae</taxon>
        <taxon>Streptophyta</taxon>
        <taxon>Embryophyta</taxon>
        <taxon>Tracheophyta</taxon>
        <taxon>Spermatophyta</taxon>
        <taxon>Magnoliopsida</taxon>
        <taxon>eudicotyledons</taxon>
        <taxon>Gunneridae</taxon>
        <taxon>Pentapetalae</taxon>
        <taxon>rosids</taxon>
        <taxon>malvids</taxon>
        <taxon>Brassicales</taxon>
        <taxon>Brassicaceae</taxon>
        <taxon>Camelineae</taxon>
        <taxon>Arabidopsis</taxon>
    </lineage>
</organism>
<protein>
    <recommendedName>
        <fullName>Flavin-containing monooxygenase FMO GS-OX-like 7</fullName>
        <ecNumber>1.8.-.-</ecNumber>
    </recommendedName>
    <alternativeName>
        <fullName>Flavin-monooxygenase glucosinolate S-oxygenase-like 7</fullName>
    </alternativeName>
</protein>
<keyword id="KW-0274">FAD</keyword>
<keyword id="KW-0285">Flavoprotein</keyword>
<keyword id="KW-0503">Monooxygenase</keyword>
<keyword id="KW-0521">NADP</keyword>
<keyword id="KW-0560">Oxidoreductase</keyword>
<keyword id="KW-1185">Reference proteome</keyword>
<dbReference type="EC" id="1.8.-.-"/>
<dbReference type="EMBL" id="AC005698">
    <property type="protein sequence ID" value="AAD43615.1"/>
    <property type="status" value="ALT_SEQ"/>
    <property type="molecule type" value="Genomic_DNA"/>
</dbReference>
<dbReference type="EMBL" id="CP002684">
    <property type="protein sequence ID" value="AEE33980.1"/>
    <property type="status" value="ALT_SEQ"/>
    <property type="molecule type" value="Genomic_DNA"/>
</dbReference>
<dbReference type="EMBL" id="CP002684">
    <property type="protein sequence ID" value="ANM58707.1"/>
    <property type="molecule type" value="Genomic_DNA"/>
</dbReference>
<dbReference type="SMR" id="Q9SXD9"/>
<dbReference type="FunCoup" id="Q9SXD9">
    <property type="interactions" value="418"/>
</dbReference>
<dbReference type="STRING" id="3702.Q9SXD9"/>
<dbReference type="PaxDb" id="3702-AT1G62580.1"/>
<dbReference type="ProteomicsDB" id="248521"/>
<dbReference type="EnsemblPlants" id="AT1G62580.2">
    <property type="protein sequence ID" value="AT1G62580.2"/>
    <property type="gene ID" value="AT1G62580"/>
</dbReference>
<dbReference type="GeneID" id="842555"/>
<dbReference type="Gramene" id="AT1G62580.2">
    <property type="protein sequence ID" value="AT1G62580.2"/>
    <property type="gene ID" value="AT1G62580"/>
</dbReference>
<dbReference type="KEGG" id="ath:AT1G62580"/>
<dbReference type="Araport" id="AT1G62580"/>
<dbReference type="TAIR" id="AT1G62580">
    <property type="gene designation" value="NOGC1"/>
</dbReference>
<dbReference type="eggNOG" id="KOG1399">
    <property type="taxonomic scope" value="Eukaryota"/>
</dbReference>
<dbReference type="HOGENOM" id="CLU_006909_3_0_1"/>
<dbReference type="InParanoid" id="Q9SXD9"/>
<dbReference type="OMA" id="MVTPLWK"/>
<dbReference type="PhylomeDB" id="Q9SXD9"/>
<dbReference type="BioCyc" id="ARA:AT1G62580-MONOMER"/>
<dbReference type="PRO" id="PR:Q9SXD9"/>
<dbReference type="Proteomes" id="UP000006548">
    <property type="component" value="Chromosome 1"/>
</dbReference>
<dbReference type="ExpressionAtlas" id="Q9SXD9">
    <property type="expression patterns" value="baseline and differential"/>
</dbReference>
<dbReference type="GO" id="GO:0050660">
    <property type="term" value="F:flavin adenine dinucleotide binding"/>
    <property type="evidence" value="ECO:0007669"/>
    <property type="project" value="InterPro"/>
</dbReference>
<dbReference type="GO" id="GO:0004383">
    <property type="term" value="F:guanylate cyclase activity"/>
    <property type="evidence" value="ECO:0000314"/>
    <property type="project" value="TAIR"/>
</dbReference>
<dbReference type="GO" id="GO:0004499">
    <property type="term" value="F:N,N-dimethylaniline monooxygenase activity"/>
    <property type="evidence" value="ECO:0007669"/>
    <property type="project" value="InterPro"/>
</dbReference>
<dbReference type="GO" id="GO:0050661">
    <property type="term" value="F:NADP binding"/>
    <property type="evidence" value="ECO:0007669"/>
    <property type="project" value="InterPro"/>
</dbReference>
<dbReference type="GO" id="GO:0070026">
    <property type="term" value="F:nitric oxide binding"/>
    <property type="evidence" value="ECO:0000314"/>
    <property type="project" value="TAIR"/>
</dbReference>
<dbReference type="GO" id="GO:0019825">
    <property type="term" value="F:oxygen binding"/>
    <property type="evidence" value="ECO:0000314"/>
    <property type="project" value="TAIR"/>
</dbReference>
<dbReference type="GO" id="GO:0090332">
    <property type="term" value="P:stomatal closure"/>
    <property type="evidence" value="ECO:0000315"/>
    <property type="project" value="TAIR"/>
</dbReference>
<dbReference type="FunFam" id="3.50.50.60:FF:000099">
    <property type="entry name" value="Flavin-containing monooxygenase"/>
    <property type="match status" value="1"/>
</dbReference>
<dbReference type="Gene3D" id="3.50.50.60">
    <property type="entry name" value="FAD/NAD(P)-binding domain"/>
    <property type="match status" value="2"/>
</dbReference>
<dbReference type="InterPro" id="IPR036188">
    <property type="entry name" value="FAD/NAD-bd_sf"/>
</dbReference>
<dbReference type="InterPro" id="IPR000960">
    <property type="entry name" value="Flavin_mOase"/>
</dbReference>
<dbReference type="InterPro" id="IPR020946">
    <property type="entry name" value="Flavin_mOase-like"/>
</dbReference>
<dbReference type="InterPro" id="IPR050346">
    <property type="entry name" value="FMO-like"/>
</dbReference>
<dbReference type="PANTHER" id="PTHR23023">
    <property type="entry name" value="DIMETHYLANILINE MONOOXYGENASE"/>
    <property type="match status" value="1"/>
</dbReference>
<dbReference type="Pfam" id="PF00743">
    <property type="entry name" value="FMO-like"/>
    <property type="match status" value="2"/>
</dbReference>
<dbReference type="PRINTS" id="PR00370">
    <property type="entry name" value="FMOXYGENASE"/>
</dbReference>
<dbReference type="SUPFAM" id="SSF51905">
    <property type="entry name" value="FAD/NAD(P)-binding domain"/>
    <property type="match status" value="2"/>
</dbReference>